<gene>
    <name evidence="1" type="primary">rimP</name>
    <name type="ordered locus">Sbal_3241</name>
</gene>
<name>RIMP_SHEB5</name>
<comment type="function">
    <text evidence="1">Required for maturation of 30S ribosomal subunits.</text>
</comment>
<comment type="subcellular location">
    <subcellularLocation>
        <location evidence="1">Cytoplasm</location>
    </subcellularLocation>
</comment>
<comment type="similarity">
    <text evidence="1">Belongs to the RimP family.</text>
</comment>
<organism>
    <name type="scientific">Shewanella baltica (strain OS155 / ATCC BAA-1091)</name>
    <dbReference type="NCBI Taxonomy" id="325240"/>
    <lineage>
        <taxon>Bacteria</taxon>
        <taxon>Pseudomonadati</taxon>
        <taxon>Pseudomonadota</taxon>
        <taxon>Gammaproteobacteria</taxon>
        <taxon>Alteromonadales</taxon>
        <taxon>Shewanellaceae</taxon>
        <taxon>Shewanella</taxon>
    </lineage>
</organism>
<keyword id="KW-0963">Cytoplasm</keyword>
<keyword id="KW-1185">Reference proteome</keyword>
<keyword id="KW-0690">Ribosome biogenesis</keyword>
<dbReference type="EMBL" id="CP000563">
    <property type="protein sequence ID" value="ABN62721.1"/>
    <property type="molecule type" value="Genomic_DNA"/>
</dbReference>
<dbReference type="RefSeq" id="WP_006082718.1">
    <property type="nucleotide sequence ID" value="NC_009052.1"/>
</dbReference>
<dbReference type="SMR" id="A3D7K8"/>
<dbReference type="STRING" id="325240.Sbal_3241"/>
<dbReference type="GeneID" id="11773460"/>
<dbReference type="KEGG" id="sbl:Sbal_3241"/>
<dbReference type="HOGENOM" id="CLU_070525_1_1_6"/>
<dbReference type="OrthoDB" id="9805006at2"/>
<dbReference type="Proteomes" id="UP000001557">
    <property type="component" value="Chromosome"/>
</dbReference>
<dbReference type="GO" id="GO:0005829">
    <property type="term" value="C:cytosol"/>
    <property type="evidence" value="ECO:0007669"/>
    <property type="project" value="TreeGrafter"/>
</dbReference>
<dbReference type="GO" id="GO:0000028">
    <property type="term" value="P:ribosomal small subunit assembly"/>
    <property type="evidence" value="ECO:0007669"/>
    <property type="project" value="TreeGrafter"/>
</dbReference>
<dbReference type="GO" id="GO:0006412">
    <property type="term" value="P:translation"/>
    <property type="evidence" value="ECO:0007669"/>
    <property type="project" value="TreeGrafter"/>
</dbReference>
<dbReference type="CDD" id="cd01734">
    <property type="entry name" value="YlxS_C"/>
    <property type="match status" value="1"/>
</dbReference>
<dbReference type="FunFam" id="2.30.30.180:FF:000001">
    <property type="entry name" value="Ribosome maturation factor RimP"/>
    <property type="match status" value="1"/>
</dbReference>
<dbReference type="FunFam" id="3.30.300.70:FF:000001">
    <property type="entry name" value="Ribosome maturation factor RimP"/>
    <property type="match status" value="1"/>
</dbReference>
<dbReference type="Gene3D" id="2.30.30.180">
    <property type="entry name" value="Ribosome maturation factor RimP, C-terminal domain"/>
    <property type="match status" value="1"/>
</dbReference>
<dbReference type="Gene3D" id="3.30.300.70">
    <property type="entry name" value="RimP-like superfamily, N-terminal"/>
    <property type="match status" value="1"/>
</dbReference>
<dbReference type="HAMAP" id="MF_01077">
    <property type="entry name" value="RimP"/>
    <property type="match status" value="1"/>
</dbReference>
<dbReference type="InterPro" id="IPR003728">
    <property type="entry name" value="Ribosome_maturation_RimP"/>
</dbReference>
<dbReference type="InterPro" id="IPR028998">
    <property type="entry name" value="RimP_C"/>
</dbReference>
<dbReference type="InterPro" id="IPR036847">
    <property type="entry name" value="RimP_C_sf"/>
</dbReference>
<dbReference type="InterPro" id="IPR028989">
    <property type="entry name" value="RimP_N"/>
</dbReference>
<dbReference type="InterPro" id="IPR035956">
    <property type="entry name" value="RimP_N_sf"/>
</dbReference>
<dbReference type="NCBIfam" id="NF000927">
    <property type="entry name" value="PRK00092.1-1"/>
    <property type="match status" value="1"/>
</dbReference>
<dbReference type="PANTHER" id="PTHR33867">
    <property type="entry name" value="RIBOSOME MATURATION FACTOR RIMP"/>
    <property type="match status" value="1"/>
</dbReference>
<dbReference type="PANTHER" id="PTHR33867:SF1">
    <property type="entry name" value="RIBOSOME MATURATION FACTOR RIMP"/>
    <property type="match status" value="1"/>
</dbReference>
<dbReference type="Pfam" id="PF17384">
    <property type="entry name" value="DUF150_C"/>
    <property type="match status" value="1"/>
</dbReference>
<dbReference type="Pfam" id="PF02576">
    <property type="entry name" value="RimP_N"/>
    <property type="match status" value="1"/>
</dbReference>
<dbReference type="SUPFAM" id="SSF74942">
    <property type="entry name" value="YhbC-like, C-terminal domain"/>
    <property type="match status" value="1"/>
</dbReference>
<dbReference type="SUPFAM" id="SSF75420">
    <property type="entry name" value="YhbC-like, N-terminal domain"/>
    <property type="match status" value="1"/>
</dbReference>
<proteinExistence type="inferred from homology"/>
<sequence>MATLEFRLAEMLKVPVEALGFQLWGIEYVQAGKHSTLRVFIDGENGINIEDCANASRQVSAVLDVEDPISTEYTLEVSSPGVDRPLFTAEQYAGYVGEDVKLQLTMPVDGSRNLKGAITAVDGQMLSLKVNGKELVVALDNIRKGNLIAKF</sequence>
<feature type="chain" id="PRO_1000064767" description="Ribosome maturation factor RimP">
    <location>
        <begin position="1"/>
        <end position="151"/>
    </location>
</feature>
<protein>
    <recommendedName>
        <fullName evidence="1">Ribosome maturation factor RimP</fullName>
    </recommendedName>
</protein>
<evidence type="ECO:0000255" key="1">
    <source>
        <dbReference type="HAMAP-Rule" id="MF_01077"/>
    </source>
</evidence>
<reference key="1">
    <citation type="submission" date="2007-02" db="EMBL/GenBank/DDBJ databases">
        <title>Complete sequence of chromosome of Shewanella baltica OS155.</title>
        <authorList>
            <consortium name="US DOE Joint Genome Institute"/>
            <person name="Copeland A."/>
            <person name="Lucas S."/>
            <person name="Lapidus A."/>
            <person name="Barry K."/>
            <person name="Detter J.C."/>
            <person name="Glavina del Rio T."/>
            <person name="Hammon N."/>
            <person name="Israni S."/>
            <person name="Dalin E."/>
            <person name="Tice H."/>
            <person name="Pitluck S."/>
            <person name="Sims D.R."/>
            <person name="Brettin T."/>
            <person name="Bruce D."/>
            <person name="Han C."/>
            <person name="Tapia R."/>
            <person name="Brainard J."/>
            <person name="Schmutz J."/>
            <person name="Larimer F."/>
            <person name="Land M."/>
            <person name="Hauser L."/>
            <person name="Kyrpides N."/>
            <person name="Mikhailova N."/>
            <person name="Brettar I."/>
            <person name="Klappenbach J."/>
            <person name="Konstantinidis K."/>
            <person name="Rodrigues J."/>
            <person name="Tiedje J."/>
            <person name="Richardson P."/>
        </authorList>
    </citation>
    <scope>NUCLEOTIDE SEQUENCE [LARGE SCALE GENOMIC DNA]</scope>
    <source>
        <strain>OS155 / ATCC BAA-1091</strain>
    </source>
</reference>
<accession>A3D7K8</accession>